<protein>
    <recommendedName>
        <fullName>Tubulin alpha chain</fullName>
        <ecNumber evidence="2">3.6.5.-</ecNumber>
    </recommendedName>
</protein>
<feature type="chain" id="PRO_0000048221" description="Tubulin alpha chain">
    <location>
        <begin position="1" status="less than"/>
        <end position="50" status="greater than"/>
    </location>
</feature>
<feature type="active site" evidence="2">
    <location>
        <position position="40"/>
    </location>
</feature>
<feature type="binding site" evidence="2">
    <location>
        <position position="28"/>
    </location>
    <ligand>
        <name>GTP</name>
        <dbReference type="ChEBI" id="CHEBI:37565"/>
    </ligand>
</feature>
<feature type="non-consecutive residues" evidence="4">
    <location>
        <begin position="15"/>
        <end position="16"/>
    </location>
</feature>
<feature type="non-consecutive residues" evidence="4">
    <location>
        <begin position="29"/>
        <end position="30"/>
    </location>
</feature>
<feature type="non-terminal residue">
    <location>
        <position position="1"/>
    </location>
</feature>
<feature type="non-terminal residue">
    <location>
        <position position="50"/>
    </location>
</feature>
<keyword id="KW-0963">Cytoplasm</keyword>
<keyword id="KW-0206">Cytoskeleton</keyword>
<keyword id="KW-0903">Direct protein sequencing</keyword>
<keyword id="KW-0342">GTP-binding</keyword>
<keyword id="KW-0378">Hydrolase</keyword>
<keyword id="KW-0493">Microtubule</keyword>
<keyword id="KW-0547">Nucleotide-binding</keyword>
<keyword id="KW-1185">Reference proteome</keyword>
<sequence>AIFVDLEPTVIDEVRSLDIERPTYTNLNRFDGAINVDVTEFQTNLVPYPR</sequence>
<organism>
    <name type="scientific">Populus euphratica</name>
    <name type="common">Euphrates poplar</name>
    <dbReference type="NCBI Taxonomy" id="75702"/>
    <lineage>
        <taxon>Eukaryota</taxon>
        <taxon>Viridiplantae</taxon>
        <taxon>Streptophyta</taxon>
        <taxon>Embryophyta</taxon>
        <taxon>Tracheophyta</taxon>
        <taxon>Spermatophyta</taxon>
        <taxon>Magnoliopsida</taxon>
        <taxon>eudicotyledons</taxon>
        <taxon>Gunneridae</taxon>
        <taxon>Pentapetalae</taxon>
        <taxon>rosids</taxon>
        <taxon>fabids</taxon>
        <taxon>Malpighiales</taxon>
        <taxon>Salicaceae</taxon>
        <taxon>Saliceae</taxon>
        <taxon>Populus</taxon>
    </lineage>
</organism>
<accession>P84549</accession>
<name>TBA_POPEU</name>
<comment type="function">
    <text>Tubulin is the major constituent of microtubules, a cylinder consisting of laterally associated linear protofilaments composed of alpha- and beta-tubulin heterodimers. Microtubules grow by the addition of GTP-tubulin dimers to the microtubule end, where a stabilizing cap forms. Below the cap, tubulin dimers are in GDP-bound state, owing to GTPase activity of alpha-tubulin.</text>
</comment>
<comment type="catalytic activity">
    <reaction evidence="2">
        <text>GTP + H2O = GDP + phosphate + H(+)</text>
        <dbReference type="Rhea" id="RHEA:19669"/>
        <dbReference type="ChEBI" id="CHEBI:15377"/>
        <dbReference type="ChEBI" id="CHEBI:15378"/>
        <dbReference type="ChEBI" id="CHEBI:37565"/>
        <dbReference type="ChEBI" id="CHEBI:43474"/>
        <dbReference type="ChEBI" id="CHEBI:58189"/>
    </reaction>
    <physiologicalReaction direction="left-to-right" evidence="2">
        <dbReference type="Rhea" id="RHEA:19670"/>
    </physiologicalReaction>
</comment>
<comment type="cofactor">
    <cofactor evidence="2">
        <name>Mg(2+)</name>
        <dbReference type="ChEBI" id="CHEBI:18420"/>
    </cofactor>
</comment>
<comment type="subunit">
    <text>Dimer of alpha and beta chains. A typical microtubule is a hollow water-filled tube with an outer diameter of 25 nm and an inner diameter of 15 nM. Alpha-beta heterodimers associate head-to-tail to form protofilaments running lengthwise along the microtubule wall with the beta-tubulin subunit facing the microtubule plus end conferring a structural polarity. Microtubules usually have 13 protofilaments but different protofilament numbers can be found in some organisms and specialized cells.</text>
</comment>
<comment type="subcellular location">
    <subcellularLocation>
        <location evidence="1">Cytoplasm</location>
        <location evidence="1">Cytoskeleton</location>
    </subcellularLocation>
</comment>
<comment type="similarity">
    <text evidence="3">Belongs to the tubulin family.</text>
</comment>
<evidence type="ECO:0000250" key="1"/>
<evidence type="ECO:0000250" key="2">
    <source>
        <dbReference type="UniProtKB" id="P68363"/>
    </source>
</evidence>
<evidence type="ECO:0000255" key="3"/>
<evidence type="ECO:0000305" key="4"/>
<proteinExistence type="evidence at protein level"/>
<dbReference type="EC" id="3.6.5.-" evidence="2"/>
<dbReference type="SMR" id="P84549"/>
<dbReference type="Proteomes" id="UP000694918">
    <property type="component" value="Unplaced"/>
</dbReference>
<dbReference type="GO" id="GO:0005737">
    <property type="term" value="C:cytoplasm"/>
    <property type="evidence" value="ECO:0007669"/>
    <property type="project" value="UniProtKB-KW"/>
</dbReference>
<dbReference type="GO" id="GO:0005874">
    <property type="term" value="C:microtubule"/>
    <property type="evidence" value="ECO:0007669"/>
    <property type="project" value="UniProtKB-KW"/>
</dbReference>
<dbReference type="GO" id="GO:0005525">
    <property type="term" value="F:GTP binding"/>
    <property type="evidence" value="ECO:0007669"/>
    <property type="project" value="UniProtKB-KW"/>
</dbReference>
<dbReference type="GO" id="GO:0016787">
    <property type="term" value="F:hydrolase activity"/>
    <property type="evidence" value="ECO:0007669"/>
    <property type="project" value="UniProtKB-KW"/>
</dbReference>
<dbReference type="GO" id="GO:0007017">
    <property type="term" value="P:microtubule-based process"/>
    <property type="evidence" value="ECO:0007669"/>
    <property type="project" value="InterPro"/>
</dbReference>
<dbReference type="Gene3D" id="3.40.50.1440">
    <property type="entry name" value="Tubulin/FtsZ, GTPase domain"/>
    <property type="match status" value="1"/>
</dbReference>
<dbReference type="InterPro" id="IPR000217">
    <property type="entry name" value="Tubulin"/>
</dbReference>
<dbReference type="InterPro" id="IPR036525">
    <property type="entry name" value="Tubulin/FtsZ_GTPase_sf"/>
</dbReference>
<dbReference type="PANTHER" id="PTHR11588">
    <property type="entry name" value="TUBULIN"/>
    <property type="match status" value="1"/>
</dbReference>
<reference key="1">
    <citation type="journal article" date="2006" name="Ann. Bot.">
        <title>Proteome profiling of Populus euphratica Oliv. upon heat stress.</title>
        <authorList>
            <person name="Ferreira S."/>
            <person name="Hjernoe K."/>
            <person name="Larsen M."/>
            <person name="Wingsle G."/>
            <person name="Larsen P."/>
            <person name="Fey S."/>
            <person name="Roepstorff P."/>
            <person name="Pais M.S."/>
        </authorList>
    </citation>
    <scope>PROTEIN SEQUENCE</scope>
    <source>
        <tissue>Leaf</tissue>
    </source>
</reference>